<keyword id="KW-0472">Membrane</keyword>
<keyword id="KW-0602">Photosynthesis</keyword>
<keyword id="KW-0604">Photosystem II</keyword>
<keyword id="KW-0674">Reaction center</keyword>
<keyword id="KW-1185">Reference proteome</keyword>
<keyword id="KW-0793">Thylakoid</keyword>
<keyword id="KW-0812">Transmembrane</keyword>
<keyword id="KW-1133">Transmembrane helix</keyword>
<dbReference type="EMBL" id="CP000435">
    <property type="protein sequence ID" value="ABI45235.1"/>
    <property type="molecule type" value="Genomic_DNA"/>
</dbReference>
<dbReference type="RefSeq" id="WP_006042333.1">
    <property type="nucleotide sequence ID" value="NC_008319.1"/>
</dbReference>
<dbReference type="SMR" id="Q0IDD1"/>
<dbReference type="STRING" id="64471.sync_0307"/>
<dbReference type="KEGG" id="syg:sync_0307"/>
<dbReference type="eggNOG" id="ENOG5033CII">
    <property type="taxonomic scope" value="Bacteria"/>
</dbReference>
<dbReference type="HOGENOM" id="CLU_212150_0_0_3"/>
<dbReference type="Proteomes" id="UP000001961">
    <property type="component" value="Chromosome"/>
</dbReference>
<dbReference type="GO" id="GO:0009539">
    <property type="term" value="C:photosystem II reaction center"/>
    <property type="evidence" value="ECO:0007669"/>
    <property type="project" value="InterPro"/>
</dbReference>
<dbReference type="GO" id="GO:0031676">
    <property type="term" value="C:plasma membrane-derived thylakoid membrane"/>
    <property type="evidence" value="ECO:0007669"/>
    <property type="project" value="UniProtKB-SubCell"/>
</dbReference>
<dbReference type="GO" id="GO:0015979">
    <property type="term" value="P:photosynthesis"/>
    <property type="evidence" value="ECO:0007669"/>
    <property type="project" value="UniProtKB-UniRule"/>
</dbReference>
<dbReference type="HAMAP" id="MF_01316">
    <property type="entry name" value="PSII_PsbI"/>
    <property type="match status" value="1"/>
</dbReference>
<dbReference type="InterPro" id="IPR003686">
    <property type="entry name" value="PSII_PsbI"/>
</dbReference>
<dbReference type="InterPro" id="IPR037271">
    <property type="entry name" value="PSII_PsbI_sf"/>
</dbReference>
<dbReference type="NCBIfam" id="NF002735">
    <property type="entry name" value="PRK02655.1"/>
    <property type="match status" value="1"/>
</dbReference>
<dbReference type="PANTHER" id="PTHR35772">
    <property type="entry name" value="PHOTOSYSTEM II REACTION CENTER PROTEIN I"/>
    <property type="match status" value="1"/>
</dbReference>
<dbReference type="PANTHER" id="PTHR35772:SF1">
    <property type="entry name" value="PHOTOSYSTEM II REACTION CENTER PROTEIN I"/>
    <property type="match status" value="1"/>
</dbReference>
<dbReference type="Pfam" id="PF02532">
    <property type="entry name" value="PsbI"/>
    <property type="match status" value="1"/>
</dbReference>
<dbReference type="SUPFAM" id="SSF161041">
    <property type="entry name" value="Photosystem II reaction center protein I, PsbI"/>
    <property type="match status" value="1"/>
</dbReference>
<proteinExistence type="inferred from homology"/>
<gene>
    <name evidence="1" type="primary">psbI</name>
    <name type="ordered locus">sync_0307</name>
</gene>
<name>PSBI_SYNS3</name>
<sequence length="39" mass="4414">MLALKISVYSVVFFFLGIFVFGFLASDPSRTPSRKDLED</sequence>
<organism>
    <name type="scientific">Synechococcus sp. (strain CC9311)</name>
    <dbReference type="NCBI Taxonomy" id="64471"/>
    <lineage>
        <taxon>Bacteria</taxon>
        <taxon>Bacillati</taxon>
        <taxon>Cyanobacteriota</taxon>
        <taxon>Cyanophyceae</taxon>
        <taxon>Synechococcales</taxon>
        <taxon>Synechococcaceae</taxon>
        <taxon>Synechococcus</taxon>
    </lineage>
</organism>
<accession>Q0IDD1</accession>
<feature type="chain" id="PRO_0000298302" description="Photosystem II reaction center protein I">
    <location>
        <begin position="1"/>
        <end position="39"/>
    </location>
</feature>
<feature type="transmembrane region" description="Helical" evidence="1">
    <location>
        <begin position="6"/>
        <end position="26"/>
    </location>
</feature>
<evidence type="ECO:0000255" key="1">
    <source>
        <dbReference type="HAMAP-Rule" id="MF_01316"/>
    </source>
</evidence>
<protein>
    <recommendedName>
        <fullName evidence="1">Photosystem II reaction center protein I</fullName>
        <shortName evidence="1">PSII-I</shortName>
    </recommendedName>
    <alternativeName>
        <fullName evidence="1">PSII 4.4 kDa protein</fullName>
    </alternativeName>
</protein>
<reference key="1">
    <citation type="journal article" date="2006" name="Proc. Natl. Acad. Sci. U.S.A.">
        <title>Genome sequence of Synechococcus CC9311: insights into adaptation to a coastal environment.</title>
        <authorList>
            <person name="Palenik B."/>
            <person name="Ren Q."/>
            <person name="Dupont C.L."/>
            <person name="Myers G.S."/>
            <person name="Heidelberg J.F."/>
            <person name="Badger J.H."/>
            <person name="Madupu R."/>
            <person name="Nelson W.C."/>
            <person name="Brinkac L.M."/>
            <person name="Dodson R.J."/>
            <person name="Durkin A.S."/>
            <person name="Daugherty S.C."/>
            <person name="Sullivan S.A."/>
            <person name="Khouri H."/>
            <person name="Mohamoud Y."/>
            <person name="Halpin R."/>
            <person name="Paulsen I.T."/>
        </authorList>
    </citation>
    <scope>NUCLEOTIDE SEQUENCE [LARGE SCALE GENOMIC DNA]</scope>
    <source>
        <strain>CC9311</strain>
    </source>
</reference>
<comment type="function">
    <text evidence="1">One of the components of the core complex of photosystem II (PSII), required for its stability and/or assembly. PSII is a light-driven water:plastoquinone oxidoreductase that uses light energy to abstract electrons from H(2)O, generating O(2) and a proton gradient subsequently used for ATP formation. It consists of a core antenna complex that captures photons, and an electron transfer chain that converts photonic excitation into a charge separation.</text>
</comment>
<comment type="subunit">
    <text evidence="1">PSII is composed of 1 copy each of membrane proteins PsbA, PsbB, PsbC, PsbD, PsbE, PsbF, PsbH, PsbI, PsbJ, PsbK, PsbL, PsbM, PsbT, PsbX, PsbY, PsbZ, Psb30/Ycf12, peripheral proteins PsbO, CyanoQ (PsbQ), PsbU, PsbV and a large number of cofactors. It forms dimeric complexes.</text>
</comment>
<comment type="subcellular location">
    <subcellularLocation>
        <location evidence="1">Cellular thylakoid membrane</location>
        <topology evidence="1">Single-pass membrane protein</topology>
    </subcellularLocation>
</comment>
<comment type="similarity">
    <text evidence="1">Belongs to the PsbI family.</text>
</comment>